<proteinExistence type="evidence at protein level"/>
<accession>Q4DJ07</accession>
<name>PGFS_TRYCC</name>
<evidence type="ECO:0000250" key="1"/>
<evidence type="ECO:0000250" key="2">
    <source>
        <dbReference type="UniProtKB" id="Q9GV41"/>
    </source>
</evidence>
<evidence type="ECO:0000256" key="3">
    <source>
        <dbReference type="SAM" id="MobiDB-lite"/>
    </source>
</evidence>
<evidence type="ECO:0000305" key="4"/>
<evidence type="ECO:0007829" key="5">
    <source>
        <dbReference type="PDB" id="4GIE"/>
    </source>
</evidence>
<keyword id="KW-0002">3D-structure</keyword>
<keyword id="KW-0963">Cytoplasm</keyword>
<keyword id="KW-0275">Fatty acid biosynthesis</keyword>
<keyword id="KW-0276">Fatty acid metabolism</keyword>
<keyword id="KW-0444">Lipid biosynthesis</keyword>
<keyword id="KW-0443">Lipid metabolism</keyword>
<keyword id="KW-0521">NADP</keyword>
<keyword id="KW-0547">Nucleotide-binding</keyword>
<keyword id="KW-0560">Oxidoreductase</keyword>
<keyword id="KW-0643">Prostaglandin biosynthesis</keyword>
<keyword id="KW-0644">Prostaglandin metabolism</keyword>
<keyword id="KW-1185">Reference proteome</keyword>
<comment type="function">
    <text evidence="2">Catalyzes the NADP-dependent formation of prostaglandin F2-alpha from prostaglandin H2. Also has aldo/ketoreductase activity towards the synthetic substrates 9,10-phenanthrenequinone and p-nitrobenzaldehyde.</text>
</comment>
<comment type="catalytic activity">
    <reaction evidence="2">
        <text>prostaglandin F2alpha + NADP(+) = prostaglandin H2 + NADPH + H(+)</text>
        <dbReference type="Rhea" id="RHEA:45312"/>
        <dbReference type="ChEBI" id="CHEBI:15378"/>
        <dbReference type="ChEBI" id="CHEBI:57404"/>
        <dbReference type="ChEBI" id="CHEBI:57405"/>
        <dbReference type="ChEBI" id="CHEBI:57783"/>
        <dbReference type="ChEBI" id="CHEBI:58349"/>
    </reaction>
</comment>
<comment type="pathway">
    <text>Lipid metabolism; prostaglandin biosynthesis.</text>
</comment>
<comment type="subunit">
    <text evidence="2">Monomer.</text>
</comment>
<comment type="subcellular location">
    <subcellularLocation>
        <location evidence="2">Cytoplasm</location>
    </subcellularLocation>
</comment>
<comment type="similarity">
    <text evidence="4">Belongs to the aldo/keto reductase family.</text>
</comment>
<feature type="chain" id="PRO_0000419494" description="9,11-endoperoxide prostaglandin H2 reductase">
    <location>
        <begin position="1"/>
        <end position="283"/>
    </location>
</feature>
<feature type="region of interest" description="Disordered" evidence="3">
    <location>
        <begin position="264"/>
        <end position="283"/>
    </location>
</feature>
<feature type="active site" description="Proton donor" evidence="1">
    <location>
        <position position="53"/>
    </location>
</feature>
<feature type="binding site" evidence="1">
    <location>
        <begin position="23"/>
        <end position="24"/>
    </location>
    <ligand>
        <name>NADP(+)</name>
        <dbReference type="ChEBI" id="CHEBI:58349"/>
    </ligand>
</feature>
<feature type="binding site" evidence="1">
    <location>
        <position position="48"/>
    </location>
    <ligand>
        <name>NADP(+)</name>
        <dbReference type="ChEBI" id="CHEBI:58349"/>
    </ligand>
</feature>
<feature type="binding site" evidence="1">
    <location>
        <position position="111"/>
    </location>
    <ligand>
        <name>substrate</name>
    </ligand>
</feature>
<feature type="binding site" evidence="1">
    <location>
        <begin position="140"/>
        <end position="141"/>
    </location>
    <ligand>
        <name>NADP(+)</name>
        <dbReference type="ChEBI" id="CHEBI:58349"/>
    </ligand>
</feature>
<feature type="binding site" evidence="1">
    <location>
        <position position="162"/>
    </location>
    <ligand>
        <name>NADP(+)</name>
        <dbReference type="ChEBI" id="CHEBI:58349"/>
    </ligand>
</feature>
<feature type="binding site" evidence="1">
    <location>
        <begin position="188"/>
        <end position="193"/>
    </location>
    <ligand>
        <name>NADP(+)</name>
        <dbReference type="ChEBI" id="CHEBI:58349"/>
    </ligand>
</feature>
<feature type="binding site" evidence="1">
    <location>
        <begin position="234"/>
        <end position="236"/>
    </location>
    <ligand>
        <name>NADP(+)</name>
        <dbReference type="ChEBI" id="CHEBI:58349"/>
    </ligand>
</feature>
<feature type="binding site" evidence="1">
    <location>
        <begin position="240"/>
        <end position="244"/>
    </location>
    <ligand>
        <name>NADP(+)</name>
        <dbReference type="ChEBI" id="CHEBI:58349"/>
    </ligand>
</feature>
<feature type="site" description="Lowers pKa of active site Tyr" evidence="1">
    <location>
        <position position="78"/>
    </location>
</feature>
<feature type="sequence conflict" description="In Ref. 2; no nucleotide entry." evidence="4" ref="2">
    <original>V</original>
    <variation>A</variation>
    <location>
        <position position="14"/>
    </location>
</feature>
<feature type="sequence conflict" description="In Ref. 2; no nucleotide entry." evidence="4" ref="2">
    <original>Y</original>
    <variation>C</variation>
    <location>
        <position position="51"/>
    </location>
</feature>
<feature type="sequence conflict" description="In Ref. 2; no nucleotide entry." evidence="4" ref="2">
    <original>S</original>
    <variation>N</variation>
    <location>
        <position position="54"/>
    </location>
</feature>
<feature type="sequence conflict" description="In Ref. 2; no nucleotide entry." evidence="4" ref="2">
    <original>R</original>
    <variation>K</variation>
    <location>
        <position position="57"/>
    </location>
</feature>
<feature type="sequence conflict" description="In Ref. 2; no nucleotide entry." evidence="4" ref="2">
    <original>EEAGI</original>
    <variation>DRTGF</variation>
    <location>
        <begin position="195"/>
        <end position="199"/>
    </location>
</feature>
<feature type="sequence conflict" description="In Ref. 2; no nucleotide entry." evidence="4" ref="2">
    <original>GD</original>
    <variation>AH</variation>
    <location>
        <begin position="271"/>
        <end position="272"/>
    </location>
</feature>
<feature type="strand" evidence="5">
    <location>
        <begin position="2"/>
        <end position="5"/>
    </location>
</feature>
<feature type="strand" evidence="5">
    <location>
        <begin position="7"/>
        <end position="9"/>
    </location>
</feature>
<feature type="strand" evidence="5">
    <location>
        <begin position="15"/>
        <end position="19"/>
    </location>
</feature>
<feature type="helix" evidence="5">
    <location>
        <begin position="30"/>
        <end position="42"/>
    </location>
</feature>
<feature type="strand" evidence="5">
    <location>
        <begin position="46"/>
        <end position="48"/>
    </location>
</feature>
<feature type="helix" evidence="5">
    <location>
        <begin position="51"/>
        <end position="53"/>
    </location>
</feature>
<feature type="helix" evidence="5">
    <location>
        <begin position="56"/>
        <end position="66"/>
    </location>
</feature>
<feature type="helix" evidence="5">
    <location>
        <begin position="70"/>
        <end position="72"/>
    </location>
</feature>
<feature type="strand" evidence="5">
    <location>
        <begin position="73"/>
        <end position="79"/>
    </location>
</feature>
<feature type="helix" evidence="5">
    <location>
        <begin position="81"/>
        <end position="83"/>
    </location>
</feature>
<feature type="helix" evidence="5">
    <location>
        <begin position="86"/>
        <end position="100"/>
    </location>
</feature>
<feature type="strand" evidence="5">
    <location>
        <begin position="105"/>
        <end position="110"/>
    </location>
</feature>
<feature type="strand" evidence="5">
    <location>
        <begin position="115"/>
        <end position="117"/>
    </location>
</feature>
<feature type="helix" evidence="5">
    <location>
        <begin position="118"/>
        <end position="130"/>
    </location>
</feature>
<feature type="strand" evidence="5">
    <location>
        <begin position="133"/>
        <end position="141"/>
    </location>
</feature>
<feature type="helix" evidence="5">
    <location>
        <begin position="144"/>
        <end position="151"/>
    </location>
</feature>
<feature type="strand" evidence="5">
    <location>
        <begin position="159"/>
        <end position="164"/>
    </location>
</feature>
<feature type="helix" evidence="5">
    <location>
        <begin position="172"/>
        <end position="180"/>
    </location>
</feature>
<feature type="strand" evidence="5">
    <location>
        <begin position="184"/>
        <end position="189"/>
    </location>
</feature>
<feature type="helix" evidence="5">
    <location>
        <begin position="195"/>
        <end position="197"/>
    </location>
</feature>
<feature type="helix" evidence="5">
    <location>
        <begin position="199"/>
        <end position="201"/>
    </location>
</feature>
<feature type="helix" evidence="5">
    <location>
        <begin position="203"/>
        <end position="212"/>
    </location>
</feature>
<feature type="helix" evidence="5">
    <location>
        <begin position="216"/>
        <end position="226"/>
    </location>
</feature>
<feature type="helix" evidence="5">
    <location>
        <begin position="238"/>
        <end position="245"/>
    </location>
</feature>
<feature type="helix" evidence="5">
    <location>
        <begin position="254"/>
        <end position="261"/>
    </location>
</feature>
<feature type="turn" evidence="5">
    <location>
        <begin position="273"/>
        <end position="275"/>
    </location>
</feature>
<sequence>MNCNYNCVTLHNSVRMPQLGLGVWRAQDGAETANAVRWAIEAGYRHIDTAYIYSNERGVGQGIRESGVPREEVWVTTKVWNSDQGYEKTLAAFERSRELLGLEYIDLYLIHWPGKKKFVDTWKALEKLYEEKKVRAIGVSNFEPHHLTELFKSCKIRPMVNQVELHPLFQQRTLREFCKQHNIAITAWSPLGSGEEAGILKNHVLGEIAKKHNKSPAQVVIRWDIQHGIVTIPKSTNKGRIQENFNVWDFKLTEEEMRQIDELNEDKRIGGDPDNFFPGGEEA</sequence>
<dbReference type="EC" id="1.1.1.-" evidence="2"/>
<dbReference type="EMBL" id="AAHK01000429">
    <property type="protein sequence ID" value="EAN92511.1"/>
    <property type="molecule type" value="Genomic_DNA"/>
</dbReference>
<dbReference type="RefSeq" id="XP_814362.1">
    <property type="nucleotide sequence ID" value="XM_809269.1"/>
</dbReference>
<dbReference type="PDB" id="4FZI">
    <property type="method" value="X-ray"/>
    <property type="resolution" value="2.60 A"/>
    <property type="chains" value="A/B=1-282"/>
</dbReference>
<dbReference type="PDB" id="4GIE">
    <property type="method" value="X-ray"/>
    <property type="resolution" value="1.25 A"/>
    <property type="chains" value="A=1-282"/>
</dbReference>
<dbReference type="PDBsum" id="4FZI"/>
<dbReference type="PDBsum" id="4GIE"/>
<dbReference type="SMR" id="Q4DJ07"/>
<dbReference type="FunCoup" id="Q4DJ07">
    <property type="interactions" value="254"/>
</dbReference>
<dbReference type="STRING" id="353153.Q4DJ07"/>
<dbReference type="PaxDb" id="353153-Q4DJ07"/>
<dbReference type="EnsemblProtists" id="EAN92511">
    <property type="protein sequence ID" value="EAN92511"/>
    <property type="gene ID" value="Tc00.1047053511287.49"/>
</dbReference>
<dbReference type="GeneID" id="3545874"/>
<dbReference type="KEGG" id="tcr:511287.49"/>
<dbReference type="eggNOG" id="KOG1577">
    <property type="taxonomic scope" value="Eukaryota"/>
</dbReference>
<dbReference type="InParanoid" id="Q4DJ07"/>
<dbReference type="BRENDA" id="1.1.1.188">
    <property type="organism ID" value="6524"/>
</dbReference>
<dbReference type="UniPathway" id="UPA00662"/>
<dbReference type="EvolutionaryTrace" id="Q4DJ07"/>
<dbReference type="Proteomes" id="UP000002296">
    <property type="component" value="Unassembled WGS sequence"/>
</dbReference>
<dbReference type="GO" id="GO:0005737">
    <property type="term" value="C:cytoplasm"/>
    <property type="evidence" value="ECO:0007669"/>
    <property type="project" value="UniProtKB-SubCell"/>
</dbReference>
<dbReference type="GO" id="GO:0004033">
    <property type="term" value="F:aldo-keto reductase (NADPH) activity"/>
    <property type="evidence" value="ECO:0007669"/>
    <property type="project" value="TreeGrafter"/>
</dbReference>
<dbReference type="GO" id="GO:0000166">
    <property type="term" value="F:nucleotide binding"/>
    <property type="evidence" value="ECO:0007669"/>
    <property type="project" value="UniProtKB-KW"/>
</dbReference>
<dbReference type="GO" id="GO:0001516">
    <property type="term" value="P:prostaglandin biosynthetic process"/>
    <property type="evidence" value="ECO:0007669"/>
    <property type="project" value="UniProtKB-UniPathway"/>
</dbReference>
<dbReference type="FunFam" id="3.20.20.100:FF:000015">
    <property type="entry name" value="Oxidoreductase, aldo/keto reductase family"/>
    <property type="match status" value="1"/>
</dbReference>
<dbReference type="Gene3D" id="3.20.20.100">
    <property type="entry name" value="NADP-dependent oxidoreductase domain"/>
    <property type="match status" value="1"/>
</dbReference>
<dbReference type="InterPro" id="IPR020471">
    <property type="entry name" value="AKR"/>
</dbReference>
<dbReference type="InterPro" id="IPR018170">
    <property type="entry name" value="Aldo/ket_reductase_CS"/>
</dbReference>
<dbReference type="InterPro" id="IPR023210">
    <property type="entry name" value="NADP_OxRdtase_dom"/>
</dbReference>
<dbReference type="InterPro" id="IPR036812">
    <property type="entry name" value="NADP_OxRdtase_dom_sf"/>
</dbReference>
<dbReference type="PANTHER" id="PTHR43827">
    <property type="entry name" value="2,5-DIKETO-D-GLUCONIC ACID REDUCTASE"/>
    <property type="match status" value="1"/>
</dbReference>
<dbReference type="PANTHER" id="PTHR43827:SF3">
    <property type="entry name" value="NADP-DEPENDENT OXIDOREDUCTASE DOMAIN-CONTAINING PROTEIN"/>
    <property type="match status" value="1"/>
</dbReference>
<dbReference type="Pfam" id="PF00248">
    <property type="entry name" value="Aldo_ket_red"/>
    <property type="match status" value="1"/>
</dbReference>
<dbReference type="PIRSF" id="PIRSF000097">
    <property type="entry name" value="AKR"/>
    <property type="match status" value="1"/>
</dbReference>
<dbReference type="PRINTS" id="PR00069">
    <property type="entry name" value="ALDKETRDTASE"/>
</dbReference>
<dbReference type="SUPFAM" id="SSF51430">
    <property type="entry name" value="NAD(P)-linked oxidoreductase"/>
    <property type="match status" value="1"/>
</dbReference>
<dbReference type="PROSITE" id="PS00798">
    <property type="entry name" value="ALDOKETO_REDUCTASE_1"/>
    <property type="match status" value="1"/>
</dbReference>
<dbReference type="PROSITE" id="PS00062">
    <property type="entry name" value="ALDOKETO_REDUCTASE_2"/>
    <property type="match status" value="1"/>
</dbReference>
<dbReference type="PROSITE" id="PS00063">
    <property type="entry name" value="ALDOKETO_REDUCTASE_3"/>
    <property type="match status" value="1"/>
</dbReference>
<gene>
    <name type="ORF">Tc00.1047053511287.49</name>
</gene>
<organism>
    <name type="scientific">Trypanosoma cruzi (strain CL Brener)</name>
    <dbReference type="NCBI Taxonomy" id="353153"/>
    <lineage>
        <taxon>Eukaryota</taxon>
        <taxon>Discoba</taxon>
        <taxon>Euglenozoa</taxon>
        <taxon>Kinetoplastea</taxon>
        <taxon>Metakinetoplastina</taxon>
        <taxon>Trypanosomatida</taxon>
        <taxon>Trypanosomatidae</taxon>
        <taxon>Trypanosoma</taxon>
        <taxon>Schizotrypanum</taxon>
    </lineage>
</organism>
<reference key="1">
    <citation type="journal article" date="2005" name="Science">
        <title>The genome sequence of Trypanosoma cruzi, etiologic agent of Chagas disease.</title>
        <authorList>
            <person name="El-Sayed N.M.A."/>
            <person name="Myler P.J."/>
            <person name="Bartholomeu D.C."/>
            <person name="Nilsson D."/>
            <person name="Aggarwal G."/>
            <person name="Tran A.-N."/>
            <person name="Ghedin E."/>
            <person name="Worthey E.A."/>
            <person name="Delcher A.L."/>
            <person name="Blandin G."/>
            <person name="Westenberger S.J."/>
            <person name="Caler E."/>
            <person name="Cerqueira G.C."/>
            <person name="Branche C."/>
            <person name="Haas B."/>
            <person name="Anupama A."/>
            <person name="Arner E."/>
            <person name="Aslund L."/>
            <person name="Attipoe P."/>
            <person name="Bontempi E."/>
            <person name="Bringaud F."/>
            <person name="Burton P."/>
            <person name="Cadag E."/>
            <person name="Campbell D.A."/>
            <person name="Carrington M."/>
            <person name="Crabtree J."/>
            <person name="Darban H."/>
            <person name="da Silveira J.F."/>
            <person name="de Jong P."/>
            <person name="Edwards K."/>
            <person name="Englund P.T."/>
            <person name="Fazelina G."/>
            <person name="Feldblyum T."/>
            <person name="Ferella M."/>
            <person name="Frasch A.C."/>
            <person name="Gull K."/>
            <person name="Horn D."/>
            <person name="Hou L."/>
            <person name="Huang Y."/>
            <person name="Kindlund E."/>
            <person name="Klingbeil M."/>
            <person name="Kluge S."/>
            <person name="Koo H."/>
            <person name="Lacerda D."/>
            <person name="Levin M.J."/>
            <person name="Lorenzi H."/>
            <person name="Louie T."/>
            <person name="Machado C.R."/>
            <person name="McCulloch R."/>
            <person name="McKenna A."/>
            <person name="Mizuno Y."/>
            <person name="Mottram J.C."/>
            <person name="Nelson S."/>
            <person name="Ochaya S."/>
            <person name="Osoegawa K."/>
            <person name="Pai G."/>
            <person name="Parsons M."/>
            <person name="Pentony M."/>
            <person name="Pettersson U."/>
            <person name="Pop M."/>
            <person name="Ramirez J.L."/>
            <person name="Rinta J."/>
            <person name="Robertson L."/>
            <person name="Salzberg S.L."/>
            <person name="Sanchez D.O."/>
            <person name="Seyler A."/>
            <person name="Sharma R."/>
            <person name="Shetty J."/>
            <person name="Simpson A.J."/>
            <person name="Sisk E."/>
            <person name="Tammi M.T."/>
            <person name="Tarleton R."/>
            <person name="Teixeira S."/>
            <person name="Van Aken S."/>
            <person name="Vogt C."/>
            <person name="Ward P.N."/>
            <person name="Wickstead B."/>
            <person name="Wortman J."/>
            <person name="White O."/>
            <person name="Fraser C.M."/>
            <person name="Stuart K.D."/>
            <person name="Andersson B."/>
        </authorList>
    </citation>
    <scope>NUCLEOTIDE SEQUENCE [LARGE SCALE GENOMIC DNA]</scope>
    <source>
        <strain>CL Brener</strain>
    </source>
</reference>
<reference key="2">
    <citation type="submission" date="2012-07" db="PDB data bank">
        <title>crystal structure of prostaglandin F synthase from Trypanosoma cruzi.</title>
        <authorList>
            <consortium name="Seattle structural genomics center for infectious disease (SSGCID)"/>
        </authorList>
    </citation>
    <scope>X-RAY CRYSTALLOGRAPHY (2.6 ANGSTROMS)</scope>
    <source>
        <strain>CL Brener</strain>
    </source>
</reference>
<protein>
    <recommendedName>
        <fullName evidence="4">9,11-endoperoxide prostaglandin H2 reductase</fullName>
        <ecNumber evidence="2">1.1.1.-</ecNumber>
    </recommendedName>
    <alternativeName>
        <fullName>Prostaglandin F2-alpha synthase</fullName>
    </alternativeName>
</protein>